<sequence length="491" mass="53580">MNTQQLAKLRSIVPEMRRVRHIHFVGIGGAGMGGIAEVLANEGYQISGSDLAPNPVTQQLLNLGATIYFNHRPENVRDASVVVVSSAISADNPEIVAAHEARIPVIRRAEMLAELMRFRHGIAIAGTHGKTTTTAMVSSIYAEAGLDPTFVNGGLVKAAGVHARLGHGRYLIAEADESDASFLHLQPMVAIVTNIEADHMDTYQGDFENLKQTFINFLHNLPFYGRAVMCVDDPVIRELLPRVGRQTTTYGFSEDADVRVEDYQQIGPQGHFTLLRQDKEPMRVTLNAPGRHNALNAAAAVAVATEEGIDDEAILRALESFQGTGRRFDFLGEFPLEPVNGKSGTAMLVDDYGHHPTEVDATIKAARAGWPDKNLVMLFQPHRFTRTRDLYDDFANVLTQVDTLLMLEVYPAGEAPIPGADSRSLCRTIRGRGKIDPILVPDPAQVAEMLAPVLTGNDLILVQGAGNIGKIARSLAEIKLKPQTPEEEQHD</sequence>
<gene>
    <name evidence="1" type="primary">murC</name>
    <name type="ordered locus">SFV_0084</name>
</gene>
<comment type="function">
    <text evidence="1">Cell wall formation.</text>
</comment>
<comment type="catalytic activity">
    <reaction evidence="1">
        <text>UDP-N-acetyl-alpha-D-muramate + L-alanine + ATP = UDP-N-acetyl-alpha-D-muramoyl-L-alanine + ADP + phosphate + H(+)</text>
        <dbReference type="Rhea" id="RHEA:23372"/>
        <dbReference type="ChEBI" id="CHEBI:15378"/>
        <dbReference type="ChEBI" id="CHEBI:30616"/>
        <dbReference type="ChEBI" id="CHEBI:43474"/>
        <dbReference type="ChEBI" id="CHEBI:57972"/>
        <dbReference type="ChEBI" id="CHEBI:70757"/>
        <dbReference type="ChEBI" id="CHEBI:83898"/>
        <dbReference type="ChEBI" id="CHEBI:456216"/>
        <dbReference type="EC" id="6.3.2.8"/>
    </reaction>
</comment>
<comment type="pathway">
    <text evidence="1">Cell wall biogenesis; peptidoglycan biosynthesis.</text>
</comment>
<comment type="subcellular location">
    <subcellularLocation>
        <location evidence="1">Cytoplasm</location>
    </subcellularLocation>
</comment>
<comment type="similarity">
    <text evidence="1">Belongs to the MurCDEF family.</text>
</comment>
<organism>
    <name type="scientific">Shigella flexneri serotype 5b (strain 8401)</name>
    <dbReference type="NCBI Taxonomy" id="373384"/>
    <lineage>
        <taxon>Bacteria</taxon>
        <taxon>Pseudomonadati</taxon>
        <taxon>Pseudomonadota</taxon>
        <taxon>Gammaproteobacteria</taxon>
        <taxon>Enterobacterales</taxon>
        <taxon>Enterobacteriaceae</taxon>
        <taxon>Shigella</taxon>
    </lineage>
</organism>
<accession>Q0T8A6</accession>
<evidence type="ECO:0000255" key="1">
    <source>
        <dbReference type="HAMAP-Rule" id="MF_00046"/>
    </source>
</evidence>
<feature type="chain" id="PRO_1000004413" description="UDP-N-acetylmuramate--L-alanine ligase">
    <location>
        <begin position="1"/>
        <end position="491"/>
    </location>
</feature>
<feature type="binding site" evidence="1">
    <location>
        <begin position="126"/>
        <end position="132"/>
    </location>
    <ligand>
        <name>ATP</name>
        <dbReference type="ChEBI" id="CHEBI:30616"/>
    </ligand>
</feature>
<protein>
    <recommendedName>
        <fullName evidence="1">UDP-N-acetylmuramate--L-alanine ligase</fullName>
        <ecNumber evidence="1">6.3.2.8</ecNumber>
    </recommendedName>
    <alternativeName>
        <fullName evidence="1">UDP-N-acetylmuramoyl-L-alanine synthetase</fullName>
    </alternativeName>
</protein>
<dbReference type="EC" id="6.3.2.8" evidence="1"/>
<dbReference type="EMBL" id="CP000266">
    <property type="protein sequence ID" value="ABF02370.1"/>
    <property type="molecule type" value="Genomic_DNA"/>
</dbReference>
<dbReference type="RefSeq" id="WP_001096033.1">
    <property type="nucleotide sequence ID" value="NC_008258.1"/>
</dbReference>
<dbReference type="SMR" id="Q0T8A6"/>
<dbReference type="KEGG" id="sfv:SFV_0084"/>
<dbReference type="HOGENOM" id="CLU_028104_2_2_6"/>
<dbReference type="UniPathway" id="UPA00219"/>
<dbReference type="Proteomes" id="UP000000659">
    <property type="component" value="Chromosome"/>
</dbReference>
<dbReference type="GO" id="GO:0005737">
    <property type="term" value="C:cytoplasm"/>
    <property type="evidence" value="ECO:0007669"/>
    <property type="project" value="UniProtKB-SubCell"/>
</dbReference>
<dbReference type="GO" id="GO:0005524">
    <property type="term" value="F:ATP binding"/>
    <property type="evidence" value="ECO:0007669"/>
    <property type="project" value="UniProtKB-UniRule"/>
</dbReference>
<dbReference type="GO" id="GO:0008763">
    <property type="term" value="F:UDP-N-acetylmuramate-L-alanine ligase activity"/>
    <property type="evidence" value="ECO:0007669"/>
    <property type="project" value="UniProtKB-UniRule"/>
</dbReference>
<dbReference type="GO" id="GO:0051301">
    <property type="term" value="P:cell division"/>
    <property type="evidence" value="ECO:0007669"/>
    <property type="project" value="UniProtKB-KW"/>
</dbReference>
<dbReference type="GO" id="GO:0071555">
    <property type="term" value="P:cell wall organization"/>
    <property type="evidence" value="ECO:0007669"/>
    <property type="project" value="UniProtKB-KW"/>
</dbReference>
<dbReference type="GO" id="GO:0009252">
    <property type="term" value="P:peptidoglycan biosynthetic process"/>
    <property type="evidence" value="ECO:0007669"/>
    <property type="project" value="UniProtKB-UniRule"/>
</dbReference>
<dbReference type="GO" id="GO:0008360">
    <property type="term" value="P:regulation of cell shape"/>
    <property type="evidence" value="ECO:0007669"/>
    <property type="project" value="UniProtKB-KW"/>
</dbReference>
<dbReference type="FunFam" id="3.40.1190.10:FF:000001">
    <property type="entry name" value="UDP-N-acetylmuramate--L-alanine ligase"/>
    <property type="match status" value="1"/>
</dbReference>
<dbReference type="FunFam" id="3.40.50.720:FF:000046">
    <property type="entry name" value="UDP-N-acetylmuramate--L-alanine ligase"/>
    <property type="match status" value="1"/>
</dbReference>
<dbReference type="FunFam" id="3.90.190.20:FF:000001">
    <property type="entry name" value="UDP-N-acetylmuramate--L-alanine ligase"/>
    <property type="match status" value="1"/>
</dbReference>
<dbReference type="Gene3D" id="3.90.190.20">
    <property type="entry name" value="Mur ligase, C-terminal domain"/>
    <property type="match status" value="1"/>
</dbReference>
<dbReference type="Gene3D" id="3.40.1190.10">
    <property type="entry name" value="Mur-like, catalytic domain"/>
    <property type="match status" value="1"/>
</dbReference>
<dbReference type="Gene3D" id="3.40.50.720">
    <property type="entry name" value="NAD(P)-binding Rossmann-like Domain"/>
    <property type="match status" value="1"/>
</dbReference>
<dbReference type="HAMAP" id="MF_00046">
    <property type="entry name" value="MurC"/>
    <property type="match status" value="1"/>
</dbReference>
<dbReference type="InterPro" id="IPR036565">
    <property type="entry name" value="Mur-like_cat_sf"/>
</dbReference>
<dbReference type="InterPro" id="IPR004101">
    <property type="entry name" value="Mur_ligase_C"/>
</dbReference>
<dbReference type="InterPro" id="IPR036615">
    <property type="entry name" value="Mur_ligase_C_dom_sf"/>
</dbReference>
<dbReference type="InterPro" id="IPR013221">
    <property type="entry name" value="Mur_ligase_cen"/>
</dbReference>
<dbReference type="InterPro" id="IPR000713">
    <property type="entry name" value="Mur_ligase_N"/>
</dbReference>
<dbReference type="InterPro" id="IPR050061">
    <property type="entry name" value="MurCDEF_pg_biosynth"/>
</dbReference>
<dbReference type="InterPro" id="IPR005758">
    <property type="entry name" value="UDP-N-AcMur_Ala_ligase_MurC"/>
</dbReference>
<dbReference type="NCBIfam" id="TIGR01082">
    <property type="entry name" value="murC"/>
    <property type="match status" value="1"/>
</dbReference>
<dbReference type="PANTHER" id="PTHR43445:SF3">
    <property type="entry name" value="UDP-N-ACETYLMURAMATE--L-ALANINE LIGASE"/>
    <property type="match status" value="1"/>
</dbReference>
<dbReference type="PANTHER" id="PTHR43445">
    <property type="entry name" value="UDP-N-ACETYLMURAMATE--L-ALANINE LIGASE-RELATED"/>
    <property type="match status" value="1"/>
</dbReference>
<dbReference type="Pfam" id="PF01225">
    <property type="entry name" value="Mur_ligase"/>
    <property type="match status" value="1"/>
</dbReference>
<dbReference type="Pfam" id="PF02875">
    <property type="entry name" value="Mur_ligase_C"/>
    <property type="match status" value="1"/>
</dbReference>
<dbReference type="Pfam" id="PF08245">
    <property type="entry name" value="Mur_ligase_M"/>
    <property type="match status" value="1"/>
</dbReference>
<dbReference type="SUPFAM" id="SSF51984">
    <property type="entry name" value="MurCD N-terminal domain"/>
    <property type="match status" value="1"/>
</dbReference>
<dbReference type="SUPFAM" id="SSF53623">
    <property type="entry name" value="MurD-like peptide ligases, catalytic domain"/>
    <property type="match status" value="1"/>
</dbReference>
<dbReference type="SUPFAM" id="SSF53244">
    <property type="entry name" value="MurD-like peptide ligases, peptide-binding domain"/>
    <property type="match status" value="1"/>
</dbReference>
<reference key="1">
    <citation type="journal article" date="2006" name="BMC Genomics">
        <title>Complete genome sequence of Shigella flexneri 5b and comparison with Shigella flexneri 2a.</title>
        <authorList>
            <person name="Nie H."/>
            <person name="Yang F."/>
            <person name="Zhang X."/>
            <person name="Yang J."/>
            <person name="Chen L."/>
            <person name="Wang J."/>
            <person name="Xiong Z."/>
            <person name="Peng J."/>
            <person name="Sun L."/>
            <person name="Dong J."/>
            <person name="Xue Y."/>
            <person name="Xu X."/>
            <person name="Chen S."/>
            <person name="Yao Z."/>
            <person name="Shen Y."/>
            <person name="Jin Q."/>
        </authorList>
    </citation>
    <scope>NUCLEOTIDE SEQUENCE [LARGE SCALE GENOMIC DNA]</scope>
    <source>
        <strain>8401</strain>
    </source>
</reference>
<name>MURC_SHIF8</name>
<keyword id="KW-0067">ATP-binding</keyword>
<keyword id="KW-0131">Cell cycle</keyword>
<keyword id="KW-0132">Cell division</keyword>
<keyword id="KW-0133">Cell shape</keyword>
<keyword id="KW-0961">Cell wall biogenesis/degradation</keyword>
<keyword id="KW-0963">Cytoplasm</keyword>
<keyword id="KW-0436">Ligase</keyword>
<keyword id="KW-0547">Nucleotide-binding</keyword>
<keyword id="KW-0573">Peptidoglycan synthesis</keyword>
<proteinExistence type="inferred from homology"/>